<sequence length="774" mass="89511">MNRSGNSQTTQKLVNLDDIWSELVEGIMQVFEHEKSLTRSQYMRFYTHVYDYCTSVSAAPSGRSSGKTGGAQLVGKKLYDRLEQFLKSYLSELLTKFKAISGEEVLLSRYTKQWKSYQFSSTVLDGICNYLNRNWVKRECEEGQKGIYKIYRLALVAWKGHLFQVLNEPVTKAVLKSIEEERQGKLINRSLVRDVIECYVELSFNEEDTDAEQQKLSVYKQNFENKFIADTSAFYEKESDAFLSTNTVTEYLKHVENRLEEETQRVRGFNSKNGLSYLHETTADVLKSTCEEVLIEKHLKIFHTEFQNLLNADRNDDLKRMYSLVALSSKNLTDLKSILENHILHQGTEAIAKCCTTDAANDPKTYVQTILDVHKKYNALVLTAFNNDNGFVAALDKACGKFINSNVVTIANSASKSPELLAKYCDLLLKKSSKNPEDKELEDNLNQVMVVFKYIEDKDVFQKYYSKMLAKRLVNHTSASDDAEAMMISKLKQTCGYEYTVKLQRMFQDIGVSKDLNSYFKQYLAEKNLTMEIDFGIEVLSSGSWPFQLSNNFLLPSELERSVRQFNEFYAARHSGRKLNWLYQMCKGELIMNVNRNNSSTYTLQASTFQMSVLLQFNDQLSFTVQQLQDNTQTQQENLIQVLQILLKAKVLTSSDNENSLTPESTVELFLDYKNKKRRININQPLKTELKVEQETVHKHIEEDRKLLIQAAIVRIMKMRKRLNHTNLISEVLNQLSTRFKPKVPVIKKCIDILIEKEYLERMEGHKDTYSYLA</sequence>
<feature type="chain" id="PRO_0000119786" description="Cullin homolog 1">
    <location>
        <begin position="1"/>
        <end position="774"/>
    </location>
</feature>
<feature type="domain" description="Cullin neddylation" evidence="2">
    <location>
        <begin position="704"/>
        <end position="764"/>
    </location>
</feature>
<feature type="cross-link" description="Glycyl lysine isopeptide (Lys-Gly) (interchain with G-Cter in NEDD8)" evidence="1">
    <location>
        <position position="718"/>
    </location>
</feature>
<feature type="sequence conflict" description="In Ref. 1; AAA85085." evidence="13" ref="1">
    <location>
        <position position="266"/>
    </location>
</feature>
<keyword id="KW-0963">Cytoplasm</keyword>
<keyword id="KW-1017">Isopeptide bond</keyword>
<keyword id="KW-1185">Reference proteome</keyword>
<keyword id="KW-0832">Ubl conjugation</keyword>
<keyword id="KW-0833">Ubl conjugation pathway</keyword>
<comment type="function">
    <text evidence="8 9 10 11">Core component of multiple SCF (SKP1-CUL1-F-box protein) E3 ubiquitin-protein ligase complexes which mediate the ubiquitination of proteins involved in cell cycle progression, signal transduction and transcription. In the SCF complex, serves as a rigid scaffold that organizes the SKP1-F-box protein and RBX1 subunits. May contribute to catalysis through positioning of the substrate and the ubiquitin-conjugating enzyme. During early metamorphosis, part of the SCF-slmb complex that negatively regulates the InR/PI3K/TOR pathway to activate the pruning of unnecessary larval ddaC dendrites and mushroom body axons (PubMed:24068890). The SCF-slmb complex also regulates asymmetrical division of neuroblasts and inhibits ectopic neuroblast formation partly through SAK and Akt1 (PubMed:24413555). Also part of an SCF complex required for caspase activation during sperm differentiation (PubMed:20392747). Necessary for auditory transduction: plays a role in Johnston's organ organization by acting in the regulation of zip and ck function in scolopidial apical attachment (PubMed:27331610). May function by acting in a Ubr3-mediated pathway that negatively regulates the ubiquitination of zip, consequently affecting its interaction with ck (PubMed:27331610).</text>
</comment>
<comment type="pathway">
    <text>Protein modification; protein ubiquitination.</text>
</comment>
<comment type="subunit">
    <text evidence="4 7 8 9 10 11 12">Component of SCF E3 ubiquitin-protein ligase complexes consisting of Skpa, Cul1, Roc1a and an F-box protein. In larval neuroblast self renewal and asymmetric division, as well as ddaC dendrite and mushroom body axon pruning, the complex contains the F-box protein slmb (SCF-slmb) (PubMed:24068890, PubMed:24413555). In caspase activation during sperm differentiation, the complex contains the F-box protein ntc (PubMed:20392747). Interacts directly with Roc1a (PubMed:11500045). Interacts with Fsn (PubMed:20123973). Interacts with Dlish (PubMed:27692068). Interacts with Cad99C (via the cytoplasmic domain) (PubMed:27331610). Interacts with Sans (PubMed:27331610).</text>
</comment>
<comment type="interaction">
    <interactant intactId="EBI-136038">
        <id>Q24311</id>
    </interactant>
    <interactant intactId="EBI-127020">
        <id>Q9VM76</id>
        <label>Rca1</label>
    </interactant>
    <organismsDiffer>false</organismsDiffer>
    <experiments>2</experiments>
</comment>
<comment type="interaction">
    <interactant intactId="EBI-136038">
        <id>Q24311</id>
    </interactant>
    <interactant intactId="EBI-180180">
        <id>O77430</id>
        <label>SkpA</label>
    </interactant>
    <organismsDiffer>false</organismsDiffer>
    <experiments>2</experiments>
</comment>
<comment type="subcellular location">
    <subcellularLocation>
        <location evidence="8">Cytoplasm</location>
    </subcellularLocation>
    <text>In the spermatid, colocalizes with ntc at the actin-based individualization complex and the cystic bulge.</text>
</comment>
<comment type="tissue specificity">
    <text evidence="8">Expressed in testis.</text>
</comment>
<comment type="PTM">
    <text evidence="5 6">Neddylated (PubMed:12183637, PubMed:18493598). Deneddylated via its interaction with the COP9 signalosome (CSN) complex (PubMed:12183637).</text>
</comment>
<comment type="disruption phenotype">
    <text evidence="9 10 11">Severe dendrite pruning defects in ddaC neurons at 16 hours after puparium formation (APF) and axon pruning defects in mushroom body gamma neurons at 24 hours APF. RNAi-mediated knockdown results in a significant increase in Akt1 protein levels and activity in ddaC somas (PubMed:24068890). In the larval brain there is a large increase in the number of neuroblasts, 40% of which show a spindle misorientation at metaphase (PubMed:24413555). RNAi-mediated knockdown results in apical detachment of scolopidial cells in Johnston's organ (PubMed:27331610).</text>
</comment>
<comment type="similarity">
    <text evidence="3">Belongs to the cullin family.</text>
</comment>
<dbReference type="EMBL" id="L41642">
    <property type="protein sequence ID" value="AAA85085.1"/>
    <property type="molecule type" value="mRNA"/>
</dbReference>
<dbReference type="EMBL" id="AF136343">
    <property type="protein sequence ID" value="AAD33676.1"/>
    <property type="molecule type" value="mRNA"/>
</dbReference>
<dbReference type="EMBL" id="AE013599">
    <property type="protein sequence ID" value="AAF59174.1"/>
    <property type="molecule type" value="Genomic_DNA"/>
</dbReference>
<dbReference type="EMBL" id="AE013599">
    <property type="protein sequence ID" value="AAM68871.1"/>
    <property type="molecule type" value="Genomic_DNA"/>
</dbReference>
<dbReference type="EMBL" id="AE013599">
    <property type="protein sequence ID" value="AAM68872.1"/>
    <property type="molecule type" value="Genomic_DNA"/>
</dbReference>
<dbReference type="EMBL" id="BT010290">
    <property type="protein sequence ID" value="AAQ23608.1"/>
    <property type="molecule type" value="mRNA"/>
</dbReference>
<dbReference type="RefSeq" id="NP_523655.1">
    <property type="nucleotide sequence ID" value="NM_078931.4"/>
</dbReference>
<dbReference type="RefSeq" id="NP_724621.1">
    <property type="nucleotide sequence ID" value="NM_165569.2"/>
</dbReference>
<dbReference type="RefSeq" id="NP_724622.1">
    <property type="nucleotide sequence ID" value="NM_165570.3"/>
</dbReference>
<dbReference type="RefSeq" id="NP_724623.1">
    <property type="nucleotide sequence ID" value="NM_165571.2"/>
</dbReference>
<dbReference type="SMR" id="Q24311"/>
<dbReference type="BioGRID" id="61606">
    <property type="interactions" value="40"/>
</dbReference>
<dbReference type="ComplexPortal" id="CPX-2646">
    <property type="entry name" value="SCF-SLMB E3 ubiquitin ligase complex"/>
</dbReference>
<dbReference type="DIP" id="DIP-19461N"/>
<dbReference type="FunCoup" id="Q24311">
    <property type="interactions" value="2549"/>
</dbReference>
<dbReference type="IntAct" id="Q24311">
    <property type="interactions" value="9"/>
</dbReference>
<dbReference type="MINT" id="Q24311"/>
<dbReference type="STRING" id="7227.FBpp0087922"/>
<dbReference type="PaxDb" id="7227-FBpp0087921"/>
<dbReference type="DNASU" id="35742"/>
<dbReference type="EnsemblMetazoa" id="FBtr0088845">
    <property type="protein sequence ID" value="FBpp0087921"/>
    <property type="gene ID" value="FBgn0015509"/>
</dbReference>
<dbReference type="EnsemblMetazoa" id="FBtr0088846">
    <property type="protein sequence ID" value="FBpp0087922"/>
    <property type="gene ID" value="FBgn0015509"/>
</dbReference>
<dbReference type="EnsemblMetazoa" id="FBtr0088847">
    <property type="protein sequence ID" value="FBpp0087923"/>
    <property type="gene ID" value="FBgn0015509"/>
</dbReference>
<dbReference type="EnsemblMetazoa" id="FBtr0088848">
    <property type="protein sequence ID" value="FBpp0087924"/>
    <property type="gene ID" value="FBgn0015509"/>
</dbReference>
<dbReference type="GeneID" id="35742"/>
<dbReference type="KEGG" id="dme:Dmel_CG1877"/>
<dbReference type="UCSC" id="CG1877-RA">
    <property type="organism name" value="d. melanogaster"/>
</dbReference>
<dbReference type="AGR" id="FB:FBgn0015509"/>
<dbReference type="CTD" id="8454"/>
<dbReference type="FlyBase" id="FBgn0015509">
    <property type="gene designation" value="Cul1"/>
</dbReference>
<dbReference type="VEuPathDB" id="VectorBase:FBgn0015509"/>
<dbReference type="eggNOG" id="KOG2166">
    <property type="taxonomic scope" value="Eukaryota"/>
</dbReference>
<dbReference type="GeneTree" id="ENSGT00940000154774"/>
<dbReference type="HOGENOM" id="CLU_004747_6_1_1"/>
<dbReference type="InParanoid" id="Q24311"/>
<dbReference type="OMA" id="IREWDRY"/>
<dbReference type="OrthoDB" id="27073at2759"/>
<dbReference type="PhylomeDB" id="Q24311"/>
<dbReference type="Reactome" id="R-DME-174113">
    <property type="pathway name" value="SCF-beta-TrCP mediated degradation of Emi1"/>
</dbReference>
<dbReference type="Reactome" id="R-DME-187577">
    <property type="pathway name" value="SCF(Skp2)-mediated degradation of p27/p21"/>
</dbReference>
<dbReference type="Reactome" id="R-DME-195253">
    <property type="pathway name" value="Degradation of beta-catenin by the destruction complex"/>
</dbReference>
<dbReference type="Reactome" id="R-DME-209360">
    <property type="pathway name" value="Ubiquitination and proteolysis of phosphorylated CI"/>
</dbReference>
<dbReference type="Reactome" id="R-DME-209461">
    <property type="pathway name" value="Ubiquitination and degradation of phosphorylated ARM"/>
</dbReference>
<dbReference type="Reactome" id="R-DME-5610780">
    <property type="pathway name" value="Degradation of GLI1 by the proteasome"/>
</dbReference>
<dbReference type="Reactome" id="R-DME-5610785">
    <property type="pathway name" value="GLI3 is processed to GLI3R by the proteasome"/>
</dbReference>
<dbReference type="Reactome" id="R-DME-68949">
    <property type="pathway name" value="Orc1 removal from chromatin"/>
</dbReference>
<dbReference type="Reactome" id="R-DME-69231">
    <property type="pathway name" value="Cyclin D associated events in G1"/>
</dbReference>
<dbReference type="Reactome" id="R-DME-8854050">
    <property type="pathway name" value="FBXL7 down-regulates AURKA during mitotic entry and in early mitosis"/>
</dbReference>
<dbReference type="Reactome" id="R-DME-8939902">
    <property type="pathway name" value="Regulation of RUNX2 expression and activity"/>
</dbReference>
<dbReference type="Reactome" id="R-DME-8951664">
    <property type="pathway name" value="Neddylation"/>
</dbReference>
<dbReference type="Reactome" id="R-DME-9020702">
    <property type="pathway name" value="Interleukin-1 signaling"/>
</dbReference>
<dbReference type="Reactome" id="R-DME-917937">
    <property type="pathway name" value="Iron uptake and transport"/>
</dbReference>
<dbReference type="Reactome" id="R-DME-9708530">
    <property type="pathway name" value="Regulation of BACH1 activity"/>
</dbReference>
<dbReference type="Reactome" id="R-DME-9762114">
    <property type="pathway name" value="GSK3B and BTRC:CUL1-mediated-degradation of NFE2L2"/>
</dbReference>
<dbReference type="Reactome" id="R-DME-983168">
    <property type="pathway name" value="Antigen processing: Ubiquitination &amp; Proteasome degradation"/>
</dbReference>
<dbReference type="SignaLink" id="Q24311"/>
<dbReference type="UniPathway" id="UPA00143"/>
<dbReference type="BioGRID-ORCS" id="35742">
    <property type="hits" value="1 hit in 1 CRISPR screen"/>
</dbReference>
<dbReference type="GenomeRNAi" id="35742"/>
<dbReference type="PRO" id="PR:Q24311"/>
<dbReference type="Proteomes" id="UP000000803">
    <property type="component" value="Chromosome 2R"/>
</dbReference>
<dbReference type="Bgee" id="FBgn0015509">
    <property type="expression patterns" value="Expressed in egg chamber and 263 other cell types or tissues"/>
</dbReference>
<dbReference type="ExpressionAtlas" id="Q24311">
    <property type="expression patterns" value="baseline and differential"/>
</dbReference>
<dbReference type="GO" id="GO:0005829">
    <property type="term" value="C:cytosol"/>
    <property type="evidence" value="ECO:0000304"/>
    <property type="project" value="Reactome"/>
</dbReference>
<dbReference type="GO" id="GO:0005634">
    <property type="term" value="C:nucleus"/>
    <property type="evidence" value="ECO:0000314"/>
    <property type="project" value="FlyBase"/>
</dbReference>
<dbReference type="GO" id="GO:0019005">
    <property type="term" value="C:SCF ubiquitin ligase complex"/>
    <property type="evidence" value="ECO:0000314"/>
    <property type="project" value="FlyBase"/>
</dbReference>
<dbReference type="GO" id="GO:0030674">
    <property type="term" value="F:protein-macromolecule adaptor activity"/>
    <property type="evidence" value="ECO:0000318"/>
    <property type="project" value="GO_Central"/>
</dbReference>
<dbReference type="GO" id="GO:0160072">
    <property type="term" value="F:ubiquitin ligase complex scaffold activity"/>
    <property type="evidence" value="ECO:0000353"/>
    <property type="project" value="FlyBase"/>
</dbReference>
<dbReference type="GO" id="GO:0031625">
    <property type="term" value="F:ubiquitin protein ligase binding"/>
    <property type="evidence" value="ECO:0000318"/>
    <property type="project" value="GO_Central"/>
</dbReference>
<dbReference type="GO" id="GO:0002785">
    <property type="term" value="P:negative regulation of antimicrobial peptide production"/>
    <property type="evidence" value="ECO:0000315"/>
    <property type="project" value="FlyBase"/>
</dbReference>
<dbReference type="GO" id="GO:0043066">
    <property type="term" value="P:negative regulation of apoptotic process"/>
    <property type="evidence" value="ECO:0000315"/>
    <property type="project" value="FlyBase"/>
</dbReference>
<dbReference type="GO" id="GO:0090090">
    <property type="term" value="P:negative regulation of canonical Wnt signaling pathway"/>
    <property type="evidence" value="ECO:0000315"/>
    <property type="project" value="FlyBase"/>
</dbReference>
<dbReference type="GO" id="GO:0035331">
    <property type="term" value="P:negative regulation of hippo signaling"/>
    <property type="evidence" value="ECO:0000315"/>
    <property type="project" value="FlyBase"/>
</dbReference>
<dbReference type="GO" id="GO:0046627">
    <property type="term" value="P:negative regulation of insulin receptor signaling pathway"/>
    <property type="evidence" value="ECO:0000316"/>
    <property type="project" value="FlyBase"/>
</dbReference>
<dbReference type="GO" id="GO:0061060">
    <property type="term" value="P:negative regulation of peptidoglycan recognition protein signaling pathway"/>
    <property type="evidence" value="ECO:0000315"/>
    <property type="project" value="FlyBase"/>
</dbReference>
<dbReference type="GO" id="GO:0051898">
    <property type="term" value="P:negative regulation of phosphatidylinositol 3-kinase/protein kinase B signal transduction"/>
    <property type="evidence" value="ECO:0000316"/>
    <property type="project" value="FlyBase"/>
</dbReference>
<dbReference type="GO" id="GO:0045879">
    <property type="term" value="P:negative regulation of smoothened signaling pathway"/>
    <property type="evidence" value="ECO:0000314"/>
    <property type="project" value="FlyBase"/>
</dbReference>
<dbReference type="GO" id="GO:1904801">
    <property type="term" value="P:positive regulation of neuron remodeling"/>
    <property type="evidence" value="ECO:0000315"/>
    <property type="project" value="FlyBase"/>
</dbReference>
<dbReference type="GO" id="GO:0032436">
    <property type="term" value="P:positive regulation of proteasomal ubiquitin-dependent protein catabolic process"/>
    <property type="evidence" value="ECO:0000315"/>
    <property type="project" value="FlyBase"/>
</dbReference>
<dbReference type="GO" id="GO:0031398">
    <property type="term" value="P:positive regulation of protein ubiquitination"/>
    <property type="evidence" value="ECO:0000315"/>
    <property type="project" value="FlyBase"/>
</dbReference>
<dbReference type="GO" id="GO:1905088">
    <property type="term" value="P:positive regulation of synaptonemal complex assembly"/>
    <property type="evidence" value="ECO:0000315"/>
    <property type="project" value="FlyBase"/>
</dbReference>
<dbReference type="GO" id="GO:0030163">
    <property type="term" value="P:protein catabolic process"/>
    <property type="evidence" value="ECO:0000315"/>
    <property type="project" value="FlyBase"/>
</dbReference>
<dbReference type="GO" id="GO:0070979">
    <property type="term" value="P:protein K11-linked ubiquitination"/>
    <property type="evidence" value="ECO:0000314"/>
    <property type="project" value="FlyBase"/>
</dbReference>
<dbReference type="GO" id="GO:0016567">
    <property type="term" value="P:protein ubiquitination"/>
    <property type="evidence" value="ECO:0000314"/>
    <property type="project" value="FlyBase"/>
</dbReference>
<dbReference type="GO" id="GO:0031146">
    <property type="term" value="P:SCF-dependent proteasomal ubiquitin-dependent protein catabolic process"/>
    <property type="evidence" value="ECO:0000318"/>
    <property type="project" value="GO_Central"/>
</dbReference>
<dbReference type="FunFam" id="1.10.10.10:FF:000014">
    <property type="entry name" value="Cullin 1"/>
    <property type="match status" value="1"/>
</dbReference>
<dbReference type="FunFam" id="1.10.10.10:FF:000161">
    <property type="entry name" value="Cullin 1"/>
    <property type="match status" value="1"/>
</dbReference>
<dbReference type="FunFam" id="1.20.1310.10:FF:000007">
    <property type="entry name" value="Cullin 1"/>
    <property type="match status" value="1"/>
</dbReference>
<dbReference type="FunFam" id="1.20.1310.10:FF:000011">
    <property type="entry name" value="Cullin 1"/>
    <property type="match status" value="1"/>
</dbReference>
<dbReference type="FunFam" id="3.30.230.130:FF:000003">
    <property type="entry name" value="Cullin 2"/>
    <property type="match status" value="1"/>
</dbReference>
<dbReference type="FunFam" id="1.20.1310.10:FF:000029">
    <property type="entry name" value="Cullin homolog 1"/>
    <property type="match status" value="1"/>
</dbReference>
<dbReference type="FunFam" id="1.20.1310.10:FF:000051">
    <property type="entry name" value="cullin homolog 1"/>
    <property type="match status" value="1"/>
</dbReference>
<dbReference type="FunFam" id="4.10.1030.10:FF:000002">
    <property type="entry name" value="cullin homolog 1"/>
    <property type="match status" value="1"/>
</dbReference>
<dbReference type="Gene3D" id="1.20.1310.10">
    <property type="entry name" value="Cullin Repeats"/>
    <property type="match status" value="4"/>
</dbReference>
<dbReference type="Gene3D" id="4.10.1030.10">
    <property type="entry name" value="Ring Box Chain A, domain 5"/>
    <property type="match status" value="1"/>
</dbReference>
<dbReference type="Gene3D" id="1.10.10.10">
    <property type="entry name" value="Winged helix-like DNA-binding domain superfamily/Winged helix DNA-binding domain"/>
    <property type="match status" value="2"/>
</dbReference>
<dbReference type="InterPro" id="IPR045093">
    <property type="entry name" value="Cullin"/>
</dbReference>
<dbReference type="InterPro" id="IPR016157">
    <property type="entry name" value="Cullin_CS"/>
</dbReference>
<dbReference type="InterPro" id="IPR016158">
    <property type="entry name" value="Cullin_homology"/>
</dbReference>
<dbReference type="InterPro" id="IPR036317">
    <property type="entry name" value="Cullin_homology_sf"/>
</dbReference>
<dbReference type="InterPro" id="IPR001373">
    <property type="entry name" value="Cullin_N"/>
</dbReference>
<dbReference type="InterPro" id="IPR019559">
    <property type="entry name" value="Cullin_neddylation_domain"/>
</dbReference>
<dbReference type="InterPro" id="IPR016159">
    <property type="entry name" value="Cullin_repeat-like_dom_sf"/>
</dbReference>
<dbReference type="InterPro" id="IPR036388">
    <property type="entry name" value="WH-like_DNA-bd_sf"/>
</dbReference>
<dbReference type="InterPro" id="IPR036390">
    <property type="entry name" value="WH_DNA-bd_sf"/>
</dbReference>
<dbReference type="PANTHER" id="PTHR11932">
    <property type="entry name" value="CULLIN"/>
    <property type="match status" value="1"/>
</dbReference>
<dbReference type="Pfam" id="PF00888">
    <property type="entry name" value="Cullin"/>
    <property type="match status" value="1"/>
</dbReference>
<dbReference type="Pfam" id="PF10557">
    <property type="entry name" value="Cullin_Nedd8"/>
    <property type="match status" value="1"/>
</dbReference>
<dbReference type="SMART" id="SM00182">
    <property type="entry name" value="CULLIN"/>
    <property type="match status" value="1"/>
</dbReference>
<dbReference type="SMART" id="SM00884">
    <property type="entry name" value="Cullin_Nedd8"/>
    <property type="match status" value="1"/>
</dbReference>
<dbReference type="SUPFAM" id="SSF75632">
    <property type="entry name" value="Cullin homology domain"/>
    <property type="match status" value="1"/>
</dbReference>
<dbReference type="SUPFAM" id="SSF74788">
    <property type="entry name" value="Cullin repeat-like"/>
    <property type="match status" value="1"/>
</dbReference>
<dbReference type="SUPFAM" id="SSF46785">
    <property type="entry name" value="Winged helix' DNA-binding domain"/>
    <property type="match status" value="1"/>
</dbReference>
<dbReference type="PROSITE" id="PS01256">
    <property type="entry name" value="CULLIN_1"/>
    <property type="match status" value="1"/>
</dbReference>
<dbReference type="PROSITE" id="PS50069">
    <property type="entry name" value="CULLIN_2"/>
    <property type="match status" value="1"/>
</dbReference>
<reference key="1">
    <citation type="submission" date="1996-01" db="EMBL/GenBank/DDBJ databases">
        <title>Homolog of C.elegans lin-19 gene.</title>
        <authorList>
            <person name="Filippov V.A."/>
            <person name="Filippova M.A."/>
            <person name="Sehnal F."/>
        </authorList>
    </citation>
    <scope>NUCLEOTIDE SEQUENCE [MRNA]</scope>
    <source>
        <strain>Oregon-R</strain>
        <tissue>Larval brain</tissue>
    </source>
</reference>
<reference key="2">
    <citation type="submission" date="1999-03" db="EMBL/GenBank/DDBJ databases">
        <title>Cul-1 limits cyclin E level in mouse and cyclin E function in Drosophila.</title>
        <authorList>
            <person name="Dealy M.J."/>
            <person name="Heriche J.K."/>
            <person name="Nguyen K.V.T."/>
            <person name="Lo J."/>
            <person name="Gstaiger M."/>
            <person name="Krek W."/>
            <person name="Ang D."/>
            <person name="Bier E."/>
            <person name="Elson D."/>
            <person name="Arbeit J."/>
            <person name="Kipreos E.T."/>
            <person name="O'Farrell P.H."/>
            <person name="Johnson R.S."/>
        </authorList>
    </citation>
    <scope>NUCLEOTIDE SEQUENCE [MRNA]</scope>
</reference>
<reference key="3">
    <citation type="journal article" date="2000" name="Science">
        <title>The genome sequence of Drosophila melanogaster.</title>
        <authorList>
            <person name="Adams M.D."/>
            <person name="Celniker S.E."/>
            <person name="Holt R.A."/>
            <person name="Evans C.A."/>
            <person name="Gocayne J.D."/>
            <person name="Amanatides P.G."/>
            <person name="Scherer S.E."/>
            <person name="Li P.W."/>
            <person name="Hoskins R.A."/>
            <person name="Galle R.F."/>
            <person name="George R.A."/>
            <person name="Lewis S.E."/>
            <person name="Richards S."/>
            <person name="Ashburner M."/>
            <person name="Henderson S.N."/>
            <person name="Sutton G.G."/>
            <person name="Wortman J.R."/>
            <person name="Yandell M.D."/>
            <person name="Zhang Q."/>
            <person name="Chen L.X."/>
            <person name="Brandon R.C."/>
            <person name="Rogers Y.-H.C."/>
            <person name="Blazej R.G."/>
            <person name="Champe M."/>
            <person name="Pfeiffer B.D."/>
            <person name="Wan K.H."/>
            <person name="Doyle C."/>
            <person name="Baxter E.G."/>
            <person name="Helt G."/>
            <person name="Nelson C.R."/>
            <person name="Miklos G.L.G."/>
            <person name="Abril J.F."/>
            <person name="Agbayani A."/>
            <person name="An H.-J."/>
            <person name="Andrews-Pfannkoch C."/>
            <person name="Baldwin D."/>
            <person name="Ballew R.M."/>
            <person name="Basu A."/>
            <person name="Baxendale J."/>
            <person name="Bayraktaroglu L."/>
            <person name="Beasley E.M."/>
            <person name="Beeson K.Y."/>
            <person name="Benos P.V."/>
            <person name="Berman B.P."/>
            <person name="Bhandari D."/>
            <person name="Bolshakov S."/>
            <person name="Borkova D."/>
            <person name="Botchan M.R."/>
            <person name="Bouck J."/>
            <person name="Brokstein P."/>
            <person name="Brottier P."/>
            <person name="Burtis K.C."/>
            <person name="Busam D.A."/>
            <person name="Butler H."/>
            <person name="Cadieu E."/>
            <person name="Center A."/>
            <person name="Chandra I."/>
            <person name="Cherry J.M."/>
            <person name="Cawley S."/>
            <person name="Dahlke C."/>
            <person name="Davenport L.B."/>
            <person name="Davies P."/>
            <person name="de Pablos B."/>
            <person name="Delcher A."/>
            <person name="Deng Z."/>
            <person name="Mays A.D."/>
            <person name="Dew I."/>
            <person name="Dietz S.M."/>
            <person name="Dodson K."/>
            <person name="Doup L.E."/>
            <person name="Downes M."/>
            <person name="Dugan-Rocha S."/>
            <person name="Dunkov B.C."/>
            <person name="Dunn P."/>
            <person name="Durbin K.J."/>
            <person name="Evangelista C.C."/>
            <person name="Ferraz C."/>
            <person name="Ferriera S."/>
            <person name="Fleischmann W."/>
            <person name="Fosler C."/>
            <person name="Gabrielian A.E."/>
            <person name="Garg N.S."/>
            <person name="Gelbart W.M."/>
            <person name="Glasser K."/>
            <person name="Glodek A."/>
            <person name="Gong F."/>
            <person name="Gorrell J.H."/>
            <person name="Gu Z."/>
            <person name="Guan P."/>
            <person name="Harris M."/>
            <person name="Harris N.L."/>
            <person name="Harvey D.A."/>
            <person name="Heiman T.J."/>
            <person name="Hernandez J.R."/>
            <person name="Houck J."/>
            <person name="Hostin D."/>
            <person name="Houston K.A."/>
            <person name="Howland T.J."/>
            <person name="Wei M.-H."/>
            <person name="Ibegwam C."/>
            <person name="Jalali M."/>
            <person name="Kalush F."/>
            <person name="Karpen G.H."/>
            <person name="Ke Z."/>
            <person name="Kennison J.A."/>
            <person name="Ketchum K.A."/>
            <person name="Kimmel B.E."/>
            <person name="Kodira C.D."/>
            <person name="Kraft C.L."/>
            <person name="Kravitz S."/>
            <person name="Kulp D."/>
            <person name="Lai Z."/>
            <person name="Lasko P."/>
            <person name="Lei Y."/>
            <person name="Levitsky A.A."/>
            <person name="Li J.H."/>
            <person name="Li Z."/>
            <person name="Liang Y."/>
            <person name="Lin X."/>
            <person name="Liu X."/>
            <person name="Mattei B."/>
            <person name="McIntosh T.C."/>
            <person name="McLeod M.P."/>
            <person name="McPherson D."/>
            <person name="Merkulov G."/>
            <person name="Milshina N.V."/>
            <person name="Mobarry C."/>
            <person name="Morris J."/>
            <person name="Moshrefi A."/>
            <person name="Mount S.M."/>
            <person name="Moy M."/>
            <person name="Murphy B."/>
            <person name="Murphy L."/>
            <person name="Muzny D.M."/>
            <person name="Nelson D.L."/>
            <person name="Nelson D.R."/>
            <person name="Nelson K.A."/>
            <person name="Nixon K."/>
            <person name="Nusskern D.R."/>
            <person name="Pacleb J.M."/>
            <person name="Palazzolo M."/>
            <person name="Pittman G.S."/>
            <person name="Pan S."/>
            <person name="Pollard J."/>
            <person name="Puri V."/>
            <person name="Reese M.G."/>
            <person name="Reinert K."/>
            <person name="Remington K."/>
            <person name="Saunders R.D.C."/>
            <person name="Scheeler F."/>
            <person name="Shen H."/>
            <person name="Shue B.C."/>
            <person name="Siden-Kiamos I."/>
            <person name="Simpson M."/>
            <person name="Skupski M.P."/>
            <person name="Smith T.J."/>
            <person name="Spier E."/>
            <person name="Spradling A.C."/>
            <person name="Stapleton M."/>
            <person name="Strong R."/>
            <person name="Sun E."/>
            <person name="Svirskas R."/>
            <person name="Tector C."/>
            <person name="Turner R."/>
            <person name="Venter E."/>
            <person name="Wang A.H."/>
            <person name="Wang X."/>
            <person name="Wang Z.-Y."/>
            <person name="Wassarman D.A."/>
            <person name="Weinstock G.M."/>
            <person name="Weissenbach J."/>
            <person name="Williams S.M."/>
            <person name="Woodage T."/>
            <person name="Worley K.C."/>
            <person name="Wu D."/>
            <person name="Yang S."/>
            <person name="Yao Q.A."/>
            <person name="Ye J."/>
            <person name="Yeh R.-F."/>
            <person name="Zaveri J.S."/>
            <person name="Zhan M."/>
            <person name="Zhang G."/>
            <person name="Zhao Q."/>
            <person name="Zheng L."/>
            <person name="Zheng X.H."/>
            <person name="Zhong F.N."/>
            <person name="Zhong W."/>
            <person name="Zhou X."/>
            <person name="Zhu S.C."/>
            <person name="Zhu X."/>
            <person name="Smith H.O."/>
            <person name="Gibbs R.A."/>
            <person name="Myers E.W."/>
            <person name="Rubin G.M."/>
            <person name="Venter J.C."/>
        </authorList>
    </citation>
    <scope>NUCLEOTIDE SEQUENCE [LARGE SCALE GENOMIC DNA]</scope>
    <source>
        <strain>Berkeley</strain>
    </source>
</reference>
<reference key="4">
    <citation type="journal article" date="2002" name="Genome Biol.">
        <title>Annotation of the Drosophila melanogaster euchromatic genome: a systematic review.</title>
        <authorList>
            <person name="Misra S."/>
            <person name="Crosby M.A."/>
            <person name="Mungall C.J."/>
            <person name="Matthews B.B."/>
            <person name="Campbell K.S."/>
            <person name="Hradecky P."/>
            <person name="Huang Y."/>
            <person name="Kaminker J.S."/>
            <person name="Millburn G.H."/>
            <person name="Prochnik S.E."/>
            <person name="Smith C.D."/>
            <person name="Tupy J.L."/>
            <person name="Whitfield E.J."/>
            <person name="Bayraktaroglu L."/>
            <person name="Berman B.P."/>
            <person name="Bettencourt B.R."/>
            <person name="Celniker S.E."/>
            <person name="de Grey A.D.N.J."/>
            <person name="Drysdale R.A."/>
            <person name="Harris N.L."/>
            <person name="Richter J."/>
            <person name="Russo S."/>
            <person name="Schroeder A.J."/>
            <person name="Shu S.Q."/>
            <person name="Stapleton M."/>
            <person name="Yamada C."/>
            <person name="Ashburner M."/>
            <person name="Gelbart W.M."/>
            <person name="Rubin G.M."/>
            <person name="Lewis S.E."/>
        </authorList>
    </citation>
    <scope>GENOME REANNOTATION</scope>
    <source>
        <strain>Berkeley</strain>
    </source>
</reference>
<reference key="5">
    <citation type="submission" date="2003-08" db="EMBL/GenBank/DDBJ databases">
        <authorList>
            <person name="Stapleton M."/>
            <person name="Brokstein P."/>
            <person name="Hong L."/>
            <person name="Agbayani A."/>
            <person name="Carlson J.W."/>
            <person name="Champe M."/>
            <person name="Chavez C."/>
            <person name="Dorsett V."/>
            <person name="Dresnek D."/>
            <person name="Farfan D."/>
            <person name="Frise E."/>
            <person name="George R.A."/>
            <person name="Gonzalez M."/>
            <person name="Guarin H."/>
            <person name="Kronmiller B."/>
            <person name="Li P.W."/>
            <person name="Liao G."/>
            <person name="Miranda A."/>
            <person name="Mungall C.J."/>
            <person name="Nunoo J."/>
            <person name="Pacleb J.M."/>
            <person name="Paragas V."/>
            <person name="Park S."/>
            <person name="Patel S."/>
            <person name="Phouanenavong S."/>
            <person name="Wan K.H."/>
            <person name="Yu C."/>
            <person name="Lewis S.E."/>
            <person name="Rubin G.M."/>
            <person name="Celniker S.E."/>
        </authorList>
    </citation>
    <scope>NUCLEOTIDE SEQUENCE [LARGE SCALE MRNA]</scope>
    <source>
        <strain>Berkeley</strain>
        <tissue>Embryo</tissue>
    </source>
</reference>
<reference key="6">
    <citation type="journal article" date="2001" name="Biochem. Biophys. Res. Commun.">
        <title>Occurrence of a putative SCF ubiquitin ligase complex in Drosophila.</title>
        <authorList>
            <person name="Bocca S.N."/>
            <person name="Muzzopappa M."/>
            <person name="Silberstein S."/>
            <person name="Wappner P."/>
        </authorList>
    </citation>
    <scope>INTERACTION WITH ROC1A AND SLMB</scope>
</reference>
<reference key="7">
    <citation type="journal article" date="2002" name="Science">
        <title>Role of predicted metalloprotease motif of Jab1/Csn5 in cleavage of Nedd8 from Cul1.</title>
        <authorList>
            <person name="Cope G.A."/>
            <person name="Suh G.S.B."/>
            <person name="Aravind L."/>
            <person name="Schwarz S.E."/>
            <person name="Zipursky S.L."/>
            <person name="Koonin E.V."/>
            <person name="Deshaies R.J."/>
        </authorList>
    </citation>
    <scope>NEDDYLATION</scope>
    <scope>DENEDDYLATION BY THE CSN COMPLEX</scope>
</reference>
<reference key="8">
    <citation type="journal article" date="2008" name="PLoS ONE">
        <title>The proto-oncogene Int6 is essential for neddylation of Cul1 and Cul3 in Drosophila.</title>
        <authorList>
            <person name="Rencus-Lazar S."/>
            <person name="Amir Y."/>
            <person name="Wu J."/>
            <person name="Chien C.T."/>
            <person name="Chamovitz D.A."/>
            <person name="Segal D."/>
        </authorList>
    </citation>
    <scope>NEDDYLATION</scope>
</reference>
<reference key="9">
    <citation type="journal article" date="2010" name="Development">
        <title>A novel F-box protein is required for caspase activation during cellular remodeling in Drosophila.</title>
        <authorList>
            <person name="Bader M."/>
            <person name="Arama E."/>
            <person name="Steller H."/>
        </authorList>
    </citation>
    <scope>FUNCTION</scope>
    <scope>IDENTIFICATION IN A COMPLEX WITH SKPA AND NTC</scope>
    <scope>SUBCELLULAR LOCATION</scope>
    <scope>TISSUE SPECIFICITY</scope>
</reference>
<reference key="10">
    <citation type="journal article" date="2010" name="Mol. Cell. Biol.">
        <title>Regulation of Drosophila vasa in vivo through paralogous cullin-RING E3 ligase specificity receptors.</title>
        <authorList>
            <person name="Kugler J.M."/>
            <person name="Woo J.S."/>
            <person name="Oh B.H."/>
            <person name="Lasko P."/>
        </authorList>
    </citation>
    <scope>INTERACTION WITH FSN</scope>
</reference>
<reference key="11">
    <citation type="journal article" date="2013" name="PLoS Biol.">
        <title>A Cullin1-based SCF E3 ubiquitin ligase targets the InR/PI3K/TOR pathway to regulate neuronal pruning.</title>
        <authorList>
            <person name="Wong J.J."/>
            <person name="Li S."/>
            <person name="Lim E.K."/>
            <person name="Wang Y."/>
            <person name="Wang C."/>
            <person name="Zhang H."/>
            <person name="Kirilly D."/>
            <person name="Wu C."/>
            <person name="Liou Y.C."/>
            <person name="Wang H."/>
            <person name="Yu F."/>
        </authorList>
    </citation>
    <scope>FUNCTION</scope>
    <scope>DEVELOPMENTAL STAGE</scope>
    <scope>DISRUPTION PHENOTYPE</scope>
    <scope>IDENTIFICATION IN SCF COMPLEX</scope>
</reference>
<reference key="12">
    <citation type="journal article" date="2014" name="EMBO Rep.">
        <title>The SCFSlimb E3 ligase complex regulates asymmetric division to inhibit neuroblast overgrowth.</title>
        <authorList>
            <person name="Li S."/>
            <person name="Wang C."/>
            <person name="Sandanaraj E."/>
            <person name="Aw S.S."/>
            <person name="Koe C.T."/>
            <person name="Wong J.J."/>
            <person name="Yu F."/>
            <person name="Ang B.T."/>
            <person name="Tang C."/>
            <person name="Wang H."/>
        </authorList>
    </citation>
    <scope>FUNCTION</scope>
    <scope>SUBUNIT</scope>
    <scope>DISRUPTION PHENOTYPE</scope>
</reference>
<reference key="13">
    <citation type="journal article" date="2016" name="Elife">
        <title>The E3 ligase Ubr3 regulates Usher syndrome and MYH9 disorder proteins in the auditory organs of Drosophila and mammals.</title>
        <authorList>
            <person name="Li T."/>
            <person name="Giagtzoglou N."/>
            <person name="Eberl D.F."/>
            <person name="Jaiswal S.N."/>
            <person name="Cai T."/>
            <person name="Godt D."/>
            <person name="Groves A.K."/>
            <person name="Bellen H.J."/>
        </authorList>
    </citation>
    <scope>FUNCTION</scope>
    <scope>INTERACTION WITH CAD99C AND SANS</scope>
</reference>
<reference key="14">
    <citation type="journal article" date="2016" name="Elife">
        <title>The novel SH3 domain protein Dlish/CG10933 mediates fat signaling in Drosophila by binding and regulating Dachs.</title>
        <authorList>
            <person name="Zhang Y."/>
            <person name="Wang X."/>
            <person name="Matakatsu H."/>
            <person name="Fehon R."/>
            <person name="Blair S.S."/>
        </authorList>
    </citation>
    <scope>INTERACTION WITH DLISH</scope>
</reference>
<reference key="15">
    <citation type="journal article" date="2016" name="Elife">
        <authorList>
            <person name="Zhang Y."/>
            <person name="Wang X."/>
            <person name="Matakatsu H."/>
            <person name="Fehon R."/>
            <person name="Blair S.S."/>
        </authorList>
    </citation>
    <scope>ERRATUM OF PUBMED:27692068</scope>
</reference>
<gene>
    <name type="primary">Cul1</name>
    <name type="synonym">cul-1</name>
    <name type="synonym">lin19</name>
    <name type="ORF">CG1877</name>
</gene>
<name>CUL1_DROME</name>
<protein>
    <recommendedName>
        <fullName>Cullin homolog 1</fullName>
    </recommendedName>
    <alternativeName>
        <fullName>Lin-19 homolog protein</fullName>
    </alternativeName>
</protein>
<evidence type="ECO:0000250" key="1">
    <source>
        <dbReference type="UniProtKB" id="Q13616"/>
    </source>
</evidence>
<evidence type="ECO:0000255" key="2"/>
<evidence type="ECO:0000255" key="3">
    <source>
        <dbReference type="PROSITE-ProRule" id="PRU00330"/>
    </source>
</evidence>
<evidence type="ECO:0000269" key="4">
    <source>
    </source>
</evidence>
<evidence type="ECO:0000269" key="5">
    <source>
    </source>
</evidence>
<evidence type="ECO:0000269" key="6">
    <source>
    </source>
</evidence>
<evidence type="ECO:0000269" key="7">
    <source>
    </source>
</evidence>
<evidence type="ECO:0000269" key="8">
    <source>
    </source>
</evidence>
<evidence type="ECO:0000269" key="9">
    <source>
    </source>
</evidence>
<evidence type="ECO:0000269" key="10">
    <source>
    </source>
</evidence>
<evidence type="ECO:0000269" key="11">
    <source>
    </source>
</evidence>
<evidence type="ECO:0000269" key="12">
    <source>
    </source>
</evidence>
<evidence type="ECO:0000305" key="13"/>
<organism>
    <name type="scientific">Drosophila melanogaster</name>
    <name type="common">Fruit fly</name>
    <dbReference type="NCBI Taxonomy" id="7227"/>
    <lineage>
        <taxon>Eukaryota</taxon>
        <taxon>Metazoa</taxon>
        <taxon>Ecdysozoa</taxon>
        <taxon>Arthropoda</taxon>
        <taxon>Hexapoda</taxon>
        <taxon>Insecta</taxon>
        <taxon>Pterygota</taxon>
        <taxon>Neoptera</taxon>
        <taxon>Endopterygota</taxon>
        <taxon>Diptera</taxon>
        <taxon>Brachycera</taxon>
        <taxon>Muscomorpha</taxon>
        <taxon>Ephydroidea</taxon>
        <taxon>Drosophilidae</taxon>
        <taxon>Drosophila</taxon>
        <taxon>Sophophora</taxon>
    </lineage>
</organism>
<proteinExistence type="evidence at protein level"/>
<accession>Q24311</accession>
<accession>A4UZ78</accession>
<accession>Q0E9G0</accession>
<accession>Q9V312</accession>